<feature type="chain" id="PRO_0000383353" description="Negative regulatory protein YxlD">
    <location>
        <begin position="1"/>
        <end position="68"/>
    </location>
</feature>
<feature type="transmembrane region" description="Helical" evidence="1">
    <location>
        <begin position="5"/>
        <end position="25"/>
    </location>
</feature>
<feature type="transmembrane region" description="Helical" evidence="1">
    <location>
        <begin position="37"/>
        <end position="57"/>
    </location>
</feature>
<dbReference type="EMBL" id="D83026">
    <property type="protein sequence ID" value="BAA11735.1"/>
    <property type="molecule type" value="Genomic_DNA"/>
</dbReference>
<dbReference type="EMBL" id="AL009126">
    <property type="protein sequence ID" value="CAB15894.1"/>
    <property type="molecule type" value="Genomic_DNA"/>
</dbReference>
<dbReference type="PIR" id="G70081">
    <property type="entry name" value="G70081"/>
</dbReference>
<dbReference type="RefSeq" id="NP_391747.1">
    <property type="nucleotide sequence ID" value="NC_000964.3"/>
</dbReference>
<dbReference type="RefSeq" id="WP_003242917.1">
    <property type="nucleotide sequence ID" value="NZ_OZ025638.1"/>
</dbReference>
<dbReference type="SMR" id="P94372"/>
<dbReference type="FunCoup" id="P94372">
    <property type="interactions" value="14"/>
</dbReference>
<dbReference type="STRING" id="224308.BSU38680"/>
<dbReference type="PaxDb" id="224308-BSU38680"/>
<dbReference type="EnsemblBacteria" id="CAB15894">
    <property type="protein sequence ID" value="CAB15894"/>
    <property type="gene ID" value="BSU_38680"/>
</dbReference>
<dbReference type="GeneID" id="937398"/>
<dbReference type="KEGG" id="bsu:BSU38680"/>
<dbReference type="PATRIC" id="fig|224308.179.peg.4187"/>
<dbReference type="eggNOG" id="ENOG503062I">
    <property type="taxonomic scope" value="Bacteria"/>
</dbReference>
<dbReference type="InParanoid" id="P94372"/>
<dbReference type="OrthoDB" id="2353968at2"/>
<dbReference type="BioCyc" id="BSUB:BSU38680-MONOMER"/>
<dbReference type="Proteomes" id="UP000001570">
    <property type="component" value="Chromosome"/>
</dbReference>
<dbReference type="GO" id="GO:0005886">
    <property type="term" value="C:plasma membrane"/>
    <property type="evidence" value="ECO:0007669"/>
    <property type="project" value="UniProtKB-SubCell"/>
</dbReference>
<protein>
    <recommendedName>
        <fullName>Negative regulatory protein YxlD</fullName>
    </recommendedName>
</protein>
<reference key="1">
    <citation type="journal article" date="1996" name="Microbiology">
        <title>Sequencing of a 65 kb region of the Bacillus subtilis genome containing the lic and cel loci, and creation of a 177 kb contig covering the gnt-sacXY region.</title>
        <authorList>
            <person name="Yoshida K."/>
            <person name="Shindo K."/>
            <person name="Sano H."/>
            <person name="Seki S."/>
            <person name="Fujimura M."/>
            <person name="Yanai N."/>
            <person name="Miwa Y."/>
            <person name="Fujita Y."/>
        </authorList>
    </citation>
    <scope>NUCLEOTIDE SEQUENCE [GENOMIC DNA]</scope>
    <source>
        <strain>168 / BGSC1A1</strain>
    </source>
</reference>
<reference key="2">
    <citation type="journal article" date="1997" name="Nature">
        <title>The complete genome sequence of the Gram-positive bacterium Bacillus subtilis.</title>
        <authorList>
            <person name="Kunst F."/>
            <person name="Ogasawara N."/>
            <person name="Moszer I."/>
            <person name="Albertini A.M."/>
            <person name="Alloni G."/>
            <person name="Azevedo V."/>
            <person name="Bertero M.G."/>
            <person name="Bessieres P."/>
            <person name="Bolotin A."/>
            <person name="Borchert S."/>
            <person name="Borriss R."/>
            <person name="Boursier L."/>
            <person name="Brans A."/>
            <person name="Braun M."/>
            <person name="Brignell S.C."/>
            <person name="Bron S."/>
            <person name="Brouillet S."/>
            <person name="Bruschi C.V."/>
            <person name="Caldwell B."/>
            <person name="Capuano V."/>
            <person name="Carter N.M."/>
            <person name="Choi S.-K."/>
            <person name="Codani J.-J."/>
            <person name="Connerton I.F."/>
            <person name="Cummings N.J."/>
            <person name="Daniel R.A."/>
            <person name="Denizot F."/>
            <person name="Devine K.M."/>
            <person name="Duesterhoeft A."/>
            <person name="Ehrlich S.D."/>
            <person name="Emmerson P.T."/>
            <person name="Entian K.-D."/>
            <person name="Errington J."/>
            <person name="Fabret C."/>
            <person name="Ferrari E."/>
            <person name="Foulger D."/>
            <person name="Fritz C."/>
            <person name="Fujita M."/>
            <person name="Fujita Y."/>
            <person name="Fuma S."/>
            <person name="Galizzi A."/>
            <person name="Galleron N."/>
            <person name="Ghim S.-Y."/>
            <person name="Glaser P."/>
            <person name="Goffeau A."/>
            <person name="Golightly E.J."/>
            <person name="Grandi G."/>
            <person name="Guiseppi G."/>
            <person name="Guy B.J."/>
            <person name="Haga K."/>
            <person name="Haiech J."/>
            <person name="Harwood C.R."/>
            <person name="Henaut A."/>
            <person name="Hilbert H."/>
            <person name="Holsappel S."/>
            <person name="Hosono S."/>
            <person name="Hullo M.-F."/>
            <person name="Itaya M."/>
            <person name="Jones L.-M."/>
            <person name="Joris B."/>
            <person name="Karamata D."/>
            <person name="Kasahara Y."/>
            <person name="Klaerr-Blanchard M."/>
            <person name="Klein C."/>
            <person name="Kobayashi Y."/>
            <person name="Koetter P."/>
            <person name="Koningstein G."/>
            <person name="Krogh S."/>
            <person name="Kumano M."/>
            <person name="Kurita K."/>
            <person name="Lapidus A."/>
            <person name="Lardinois S."/>
            <person name="Lauber J."/>
            <person name="Lazarevic V."/>
            <person name="Lee S.-M."/>
            <person name="Levine A."/>
            <person name="Liu H."/>
            <person name="Masuda S."/>
            <person name="Mauel C."/>
            <person name="Medigue C."/>
            <person name="Medina N."/>
            <person name="Mellado R.P."/>
            <person name="Mizuno M."/>
            <person name="Moestl D."/>
            <person name="Nakai S."/>
            <person name="Noback M."/>
            <person name="Noone D."/>
            <person name="O'Reilly M."/>
            <person name="Ogawa K."/>
            <person name="Ogiwara A."/>
            <person name="Oudega B."/>
            <person name="Park S.-H."/>
            <person name="Parro V."/>
            <person name="Pohl T.M."/>
            <person name="Portetelle D."/>
            <person name="Porwollik S."/>
            <person name="Prescott A.M."/>
            <person name="Presecan E."/>
            <person name="Pujic P."/>
            <person name="Purnelle B."/>
            <person name="Rapoport G."/>
            <person name="Rey M."/>
            <person name="Reynolds S."/>
            <person name="Rieger M."/>
            <person name="Rivolta C."/>
            <person name="Rocha E."/>
            <person name="Roche B."/>
            <person name="Rose M."/>
            <person name="Sadaie Y."/>
            <person name="Sato T."/>
            <person name="Scanlan E."/>
            <person name="Schleich S."/>
            <person name="Schroeter R."/>
            <person name="Scoffone F."/>
            <person name="Sekiguchi J."/>
            <person name="Sekowska A."/>
            <person name="Seror S.J."/>
            <person name="Serror P."/>
            <person name="Shin B.-S."/>
            <person name="Soldo B."/>
            <person name="Sorokin A."/>
            <person name="Tacconi E."/>
            <person name="Takagi T."/>
            <person name="Takahashi H."/>
            <person name="Takemaru K."/>
            <person name="Takeuchi M."/>
            <person name="Tamakoshi A."/>
            <person name="Tanaka T."/>
            <person name="Terpstra P."/>
            <person name="Tognoni A."/>
            <person name="Tosato V."/>
            <person name="Uchiyama S."/>
            <person name="Vandenbol M."/>
            <person name="Vannier F."/>
            <person name="Vassarotti A."/>
            <person name="Viari A."/>
            <person name="Wambutt R."/>
            <person name="Wedler E."/>
            <person name="Wedler H."/>
            <person name="Weitzenegger T."/>
            <person name="Winters P."/>
            <person name="Wipat A."/>
            <person name="Yamamoto H."/>
            <person name="Yamane K."/>
            <person name="Yasumoto K."/>
            <person name="Yata K."/>
            <person name="Yoshida K."/>
            <person name="Yoshikawa H.-F."/>
            <person name="Zumstein E."/>
            <person name="Yoshikawa H."/>
            <person name="Danchin A."/>
        </authorList>
    </citation>
    <scope>NUCLEOTIDE SEQUENCE [LARGE SCALE GENOMIC DNA]</scope>
    <source>
        <strain>168</strain>
    </source>
</reference>
<reference key="3">
    <citation type="journal article" date="2003" name="J. Bacteriol.">
        <title>Regulation of the Bacillus subtilis extracytoplasmic function protein sigma(Y) and its target promoters.</title>
        <authorList>
            <person name="Cao M."/>
            <person name="Salzberg L."/>
            <person name="Tsai C.S."/>
            <person name="Mascher T."/>
            <person name="Bonilla C."/>
            <person name="Wang T."/>
            <person name="Ye R.W."/>
            <person name="Marquez-Magana L."/>
            <person name="Helmann J.D."/>
        </authorList>
    </citation>
    <scope>FUNCTION AS A NEGATIVE REGULATOR OF SIGMA Y</scope>
    <source>
        <strain>168 / CU1065</strain>
    </source>
</reference>
<reference key="4">
    <citation type="journal article" date="2003" name="J. Biochem.">
        <title>Organization and expression of the Bacillus subtilis sigY operon.</title>
        <authorList>
            <person name="Tojo S."/>
            <person name="Matsunaga M."/>
            <person name="Matsumoto T."/>
            <person name="Kang C.-M."/>
            <person name="Yamaguchi H."/>
            <person name="Asai K."/>
            <person name="Sadaie Y."/>
            <person name="Yoshida K."/>
            <person name="Fujita Y."/>
        </authorList>
    </citation>
    <scope>INDUCTION</scope>
    <source>
        <strain>168</strain>
    </source>
</reference>
<sequence>MTQTEIIITVAACLIVLAQGIFLFIDAKKRNHMAWVWGIVGLIQAPMPLICYYFFVIRPDRKKRGIKQ</sequence>
<accession>P94372</accession>
<accession>Q794Y2</accession>
<proteinExistence type="evidence at protein level"/>
<name>YXLD_BACSU</name>
<evidence type="ECO:0000255" key="1"/>
<evidence type="ECO:0000269" key="2">
    <source>
    </source>
</evidence>
<evidence type="ECO:0000269" key="3">
    <source>
    </source>
</evidence>
<evidence type="ECO:0000305" key="4"/>
<comment type="function">
    <text evidence="2">Together with YxlE, is important for negative regulation of sigma Y activity, being the major negative regulator.</text>
</comment>
<comment type="subcellular location">
    <subcellularLocation>
        <location evidence="4">Cell membrane</location>
        <topology evidence="4">Multi-pass membrane protein</topology>
    </subcellularLocation>
</comment>
<comment type="induction">
    <text evidence="3">Expression is sigma Y-dependent. Induced upon nitrogen starvation.</text>
</comment>
<gene>
    <name type="primary">yxlD</name>
    <name type="ordered locus">BSU38680</name>
</gene>
<keyword id="KW-1003">Cell membrane</keyword>
<keyword id="KW-0472">Membrane</keyword>
<keyword id="KW-1185">Reference proteome</keyword>
<keyword id="KW-0812">Transmembrane</keyword>
<keyword id="KW-1133">Transmembrane helix</keyword>
<organism>
    <name type="scientific">Bacillus subtilis (strain 168)</name>
    <dbReference type="NCBI Taxonomy" id="224308"/>
    <lineage>
        <taxon>Bacteria</taxon>
        <taxon>Bacillati</taxon>
        <taxon>Bacillota</taxon>
        <taxon>Bacilli</taxon>
        <taxon>Bacillales</taxon>
        <taxon>Bacillaceae</taxon>
        <taxon>Bacillus</taxon>
    </lineage>
</organism>